<keyword id="KW-0456">Lyase</keyword>
<organism>
    <name type="scientific">Bacillus cereus (strain ATCC 10987 / NRS 248)</name>
    <dbReference type="NCBI Taxonomy" id="222523"/>
    <lineage>
        <taxon>Bacteria</taxon>
        <taxon>Bacillati</taxon>
        <taxon>Bacillota</taxon>
        <taxon>Bacilli</taxon>
        <taxon>Bacillales</taxon>
        <taxon>Bacillaceae</taxon>
        <taxon>Bacillus</taxon>
        <taxon>Bacillus cereus group</taxon>
    </lineage>
</organism>
<gene>
    <name evidence="1" type="primary">mgsA</name>
    <name type="ordered locus">BCE_1662</name>
</gene>
<dbReference type="EC" id="4.2.3.3" evidence="1"/>
<dbReference type="EMBL" id="AE017194">
    <property type="protein sequence ID" value="AAS40591.1"/>
    <property type="molecule type" value="Genomic_DNA"/>
</dbReference>
<dbReference type="SMR" id="Q73AW0"/>
<dbReference type="KEGG" id="bca:BCE_1662"/>
<dbReference type="HOGENOM" id="CLU_120420_1_0_9"/>
<dbReference type="Proteomes" id="UP000002527">
    <property type="component" value="Chromosome"/>
</dbReference>
<dbReference type="GO" id="GO:0005829">
    <property type="term" value="C:cytosol"/>
    <property type="evidence" value="ECO:0007669"/>
    <property type="project" value="TreeGrafter"/>
</dbReference>
<dbReference type="GO" id="GO:0008929">
    <property type="term" value="F:methylglyoxal synthase activity"/>
    <property type="evidence" value="ECO:0007669"/>
    <property type="project" value="UniProtKB-UniRule"/>
</dbReference>
<dbReference type="GO" id="GO:0019242">
    <property type="term" value="P:methylglyoxal biosynthetic process"/>
    <property type="evidence" value="ECO:0007669"/>
    <property type="project" value="UniProtKB-UniRule"/>
</dbReference>
<dbReference type="CDD" id="cd01422">
    <property type="entry name" value="MGS"/>
    <property type="match status" value="1"/>
</dbReference>
<dbReference type="FunFam" id="3.40.50.1380:FF:000006">
    <property type="entry name" value="Methylglyoxal synthase"/>
    <property type="match status" value="1"/>
</dbReference>
<dbReference type="Gene3D" id="3.40.50.1380">
    <property type="entry name" value="Methylglyoxal synthase-like domain"/>
    <property type="match status" value="1"/>
</dbReference>
<dbReference type="HAMAP" id="MF_00549">
    <property type="entry name" value="Methylglyoxal_synth"/>
    <property type="match status" value="1"/>
</dbReference>
<dbReference type="InterPro" id="IPR004363">
    <property type="entry name" value="Methylgl_synth"/>
</dbReference>
<dbReference type="InterPro" id="IPR018148">
    <property type="entry name" value="Methylglyoxal_synth_AS"/>
</dbReference>
<dbReference type="InterPro" id="IPR011607">
    <property type="entry name" value="MGS-like_dom"/>
</dbReference>
<dbReference type="InterPro" id="IPR036914">
    <property type="entry name" value="MGS-like_dom_sf"/>
</dbReference>
<dbReference type="NCBIfam" id="TIGR00160">
    <property type="entry name" value="MGSA"/>
    <property type="match status" value="1"/>
</dbReference>
<dbReference type="NCBIfam" id="NF003559">
    <property type="entry name" value="PRK05234.1"/>
    <property type="match status" value="1"/>
</dbReference>
<dbReference type="PANTHER" id="PTHR30492">
    <property type="entry name" value="METHYLGLYOXAL SYNTHASE"/>
    <property type="match status" value="1"/>
</dbReference>
<dbReference type="PANTHER" id="PTHR30492:SF0">
    <property type="entry name" value="METHYLGLYOXAL SYNTHASE"/>
    <property type="match status" value="1"/>
</dbReference>
<dbReference type="Pfam" id="PF02142">
    <property type="entry name" value="MGS"/>
    <property type="match status" value="1"/>
</dbReference>
<dbReference type="PIRSF" id="PIRSF006614">
    <property type="entry name" value="Methylglyox_syn"/>
    <property type="match status" value="1"/>
</dbReference>
<dbReference type="SMART" id="SM00851">
    <property type="entry name" value="MGS"/>
    <property type="match status" value="1"/>
</dbReference>
<dbReference type="SUPFAM" id="SSF52335">
    <property type="entry name" value="Methylglyoxal synthase-like"/>
    <property type="match status" value="1"/>
</dbReference>
<dbReference type="PROSITE" id="PS01335">
    <property type="entry name" value="METHYLGLYOXAL_SYNTH"/>
    <property type="match status" value="1"/>
</dbReference>
<dbReference type="PROSITE" id="PS51855">
    <property type="entry name" value="MGS"/>
    <property type="match status" value="1"/>
</dbReference>
<evidence type="ECO:0000255" key="1">
    <source>
        <dbReference type="HAMAP-Rule" id="MF_00549"/>
    </source>
</evidence>
<proteinExistence type="inferred from homology"/>
<comment type="function">
    <text evidence="1">Catalyzes the formation of methylglyoxal from dihydroxyacetone phosphate.</text>
</comment>
<comment type="catalytic activity">
    <reaction evidence="1">
        <text>dihydroxyacetone phosphate = methylglyoxal + phosphate</text>
        <dbReference type="Rhea" id="RHEA:17937"/>
        <dbReference type="ChEBI" id="CHEBI:17158"/>
        <dbReference type="ChEBI" id="CHEBI:43474"/>
        <dbReference type="ChEBI" id="CHEBI:57642"/>
        <dbReference type="EC" id="4.2.3.3"/>
    </reaction>
</comment>
<comment type="similarity">
    <text evidence="1">Belongs to the methylglyoxal synthase family.</text>
</comment>
<accession>Q73AW0</accession>
<name>MGSA_BACC1</name>
<reference key="1">
    <citation type="journal article" date="2004" name="Nucleic Acids Res.">
        <title>The genome sequence of Bacillus cereus ATCC 10987 reveals metabolic adaptations and a large plasmid related to Bacillus anthracis pXO1.</title>
        <authorList>
            <person name="Rasko D.A."/>
            <person name="Ravel J."/>
            <person name="Oekstad O.A."/>
            <person name="Helgason E."/>
            <person name="Cer R.Z."/>
            <person name="Jiang L."/>
            <person name="Shores K.A."/>
            <person name="Fouts D.E."/>
            <person name="Tourasse N.J."/>
            <person name="Angiuoli S.V."/>
            <person name="Kolonay J.F."/>
            <person name="Nelson W.C."/>
            <person name="Kolstoe A.-B."/>
            <person name="Fraser C.M."/>
            <person name="Read T.D."/>
        </authorList>
    </citation>
    <scope>NUCLEOTIDE SEQUENCE [LARGE SCALE GENOMIC DNA]</scope>
    <source>
        <strain>ATCC 10987 / NRS 248</strain>
    </source>
</reference>
<protein>
    <recommendedName>
        <fullName evidence="1">Methylglyoxal synthase</fullName>
        <shortName evidence="1">MGS</shortName>
        <ecNumber evidence="1">4.2.3.3</ecNumber>
    </recommendedName>
</protein>
<feature type="chain" id="PRO_0000178607" description="Methylglyoxal synthase">
    <location>
        <begin position="1"/>
        <end position="131"/>
    </location>
</feature>
<feature type="domain" description="MGS-like" evidence="1">
    <location>
        <begin position="1"/>
        <end position="131"/>
    </location>
</feature>
<feature type="active site" description="Proton donor/acceptor" evidence="1">
    <location>
        <position position="60"/>
    </location>
</feature>
<feature type="binding site" evidence="1">
    <location>
        <position position="8"/>
    </location>
    <ligand>
        <name>substrate</name>
    </ligand>
</feature>
<feature type="binding site" evidence="1">
    <location>
        <position position="12"/>
    </location>
    <ligand>
        <name>substrate</name>
    </ligand>
</feature>
<feature type="binding site" evidence="1">
    <location>
        <begin position="34"/>
        <end position="37"/>
    </location>
    <ligand>
        <name>substrate</name>
    </ligand>
</feature>
<feature type="binding site" evidence="1">
    <location>
        <begin position="54"/>
        <end position="55"/>
    </location>
    <ligand>
        <name>substrate</name>
    </ligand>
</feature>
<feature type="binding site" evidence="1">
    <location>
        <position position="87"/>
    </location>
    <ligand>
        <name>substrate</name>
    </ligand>
</feature>
<sequence length="131" mass="14685">MKIALIAHDKKKNDMVSFAYAYKPIFEQHELFATGTTGLRIMEATGLVVTRYQSGPLGGDQEIGAMIAKNDLDMVIFFRDPLTAQPHEPDVNALLRLCDVYAIPLATNMASAEMLMHALERGDLDYRKLRK</sequence>